<sequence length="325" mass="36904">MSETATWQPSASIPNLLKRAAIMTEIRRFFADRGVLEVETPCMSQATVTDIHLFPFETRFVGPGHSQGMNLYLMTSPEYHMKRLLAAGCGPVFQLCRSFRNEEMGRHHNPEFTMLEWYRPHYDMYRLMNEVDDLLQQVLDCQPAESLSYQQAFQRHLEIDPLSADKTQLREAAAKLDLSNIADTEEDRDTLLQLLFTMGVEPHIGKEKPTFIYHFPASQASLAQISTEDHRVAERFEVYYKGIELANGFHELTDAREQQQRFEQDNRKRAARGLPQQPIDQNLLDALAAGLPDCSGVALGVDRLVMLALGAESLADVIAFTVDRA</sequence>
<evidence type="ECO:0000255" key="1">
    <source>
        <dbReference type="HAMAP-Rule" id="MF_00174"/>
    </source>
</evidence>
<comment type="function">
    <text evidence="1">With EpmB is involved in the beta-lysylation step of the post-translational modification of translation elongation factor P (EF-P) on 'Lys-34'. Catalyzes the ATP-dependent activation of (R)-beta-lysine produced by EpmB, forming a lysyl-adenylate, from which the beta-lysyl moiety is then transferred to the epsilon-amino group of EF-P 'Lys-34'.</text>
</comment>
<comment type="catalytic activity">
    <reaction evidence="1">
        <text>D-beta-lysine + L-lysyl-[protein] + ATP = N(6)-((3R)-3,6-diaminohexanoyl)-L-lysyl-[protein] + AMP + diphosphate + H(+)</text>
        <dbReference type="Rhea" id="RHEA:83435"/>
        <dbReference type="Rhea" id="RHEA-COMP:9752"/>
        <dbReference type="Rhea" id="RHEA-COMP:20131"/>
        <dbReference type="ChEBI" id="CHEBI:15378"/>
        <dbReference type="ChEBI" id="CHEBI:29969"/>
        <dbReference type="ChEBI" id="CHEBI:30616"/>
        <dbReference type="ChEBI" id="CHEBI:33019"/>
        <dbReference type="ChEBI" id="CHEBI:84138"/>
        <dbReference type="ChEBI" id="CHEBI:156053"/>
        <dbReference type="ChEBI" id="CHEBI:456215"/>
    </reaction>
    <physiologicalReaction direction="left-to-right" evidence="1">
        <dbReference type="Rhea" id="RHEA:83436"/>
    </physiologicalReaction>
</comment>
<comment type="subunit">
    <text evidence="1">Homodimer.</text>
</comment>
<comment type="similarity">
    <text evidence="1">Belongs to the class-II aminoacyl-tRNA synthetase family. EpmA subfamily.</text>
</comment>
<gene>
    <name evidence="1" type="primary">epmA</name>
    <name type="synonym">yjeA</name>
    <name type="ordered locus">SPA4161</name>
</gene>
<organism>
    <name type="scientific">Salmonella paratyphi A (strain ATCC 9150 / SARB42)</name>
    <dbReference type="NCBI Taxonomy" id="295319"/>
    <lineage>
        <taxon>Bacteria</taxon>
        <taxon>Pseudomonadati</taxon>
        <taxon>Pseudomonadota</taxon>
        <taxon>Gammaproteobacteria</taxon>
        <taxon>Enterobacterales</taxon>
        <taxon>Enterobacteriaceae</taxon>
        <taxon>Salmonella</taxon>
    </lineage>
</organism>
<reference key="1">
    <citation type="journal article" date="2004" name="Nat. Genet.">
        <title>Comparison of genome degradation in Paratyphi A and Typhi, human-restricted serovars of Salmonella enterica that cause typhoid.</title>
        <authorList>
            <person name="McClelland M."/>
            <person name="Sanderson K.E."/>
            <person name="Clifton S.W."/>
            <person name="Latreille P."/>
            <person name="Porwollik S."/>
            <person name="Sabo A."/>
            <person name="Meyer R."/>
            <person name="Bieri T."/>
            <person name="Ozersky P."/>
            <person name="McLellan M."/>
            <person name="Harkins C.R."/>
            <person name="Wang C."/>
            <person name="Nguyen C."/>
            <person name="Berghoff A."/>
            <person name="Elliott G."/>
            <person name="Kohlberg S."/>
            <person name="Strong C."/>
            <person name="Du F."/>
            <person name="Carter J."/>
            <person name="Kremizki C."/>
            <person name="Layman D."/>
            <person name="Leonard S."/>
            <person name="Sun H."/>
            <person name="Fulton L."/>
            <person name="Nash W."/>
            <person name="Miner T."/>
            <person name="Minx P."/>
            <person name="Delehaunty K."/>
            <person name="Fronick C."/>
            <person name="Magrini V."/>
            <person name="Nhan M."/>
            <person name="Warren W."/>
            <person name="Florea L."/>
            <person name="Spieth J."/>
            <person name="Wilson R.K."/>
        </authorList>
    </citation>
    <scope>NUCLEOTIDE SEQUENCE [LARGE SCALE GENOMIC DNA]</scope>
    <source>
        <strain>ATCC 9150 / SARB42</strain>
    </source>
</reference>
<dbReference type="EC" id="6.3.2.-" evidence="1"/>
<dbReference type="EMBL" id="CP000026">
    <property type="protein sequence ID" value="AAV79902.1"/>
    <property type="molecule type" value="Genomic_DNA"/>
</dbReference>
<dbReference type="RefSeq" id="WP_000004799.1">
    <property type="nucleotide sequence ID" value="NC_006511.1"/>
</dbReference>
<dbReference type="SMR" id="Q5PLH2"/>
<dbReference type="KEGG" id="spt:SPA4161"/>
<dbReference type="HOGENOM" id="CLU_008255_1_1_6"/>
<dbReference type="Proteomes" id="UP000008185">
    <property type="component" value="Chromosome"/>
</dbReference>
<dbReference type="GO" id="GO:0005829">
    <property type="term" value="C:cytosol"/>
    <property type="evidence" value="ECO:0007669"/>
    <property type="project" value="TreeGrafter"/>
</dbReference>
<dbReference type="GO" id="GO:0016880">
    <property type="term" value="F:acid-ammonia (or amide) ligase activity"/>
    <property type="evidence" value="ECO:0007669"/>
    <property type="project" value="UniProtKB-UniRule"/>
</dbReference>
<dbReference type="GO" id="GO:0005524">
    <property type="term" value="F:ATP binding"/>
    <property type="evidence" value="ECO:0007669"/>
    <property type="project" value="UniProtKB-UniRule"/>
</dbReference>
<dbReference type="GO" id="GO:0004824">
    <property type="term" value="F:lysine-tRNA ligase activity"/>
    <property type="evidence" value="ECO:0007669"/>
    <property type="project" value="InterPro"/>
</dbReference>
<dbReference type="GO" id="GO:0000049">
    <property type="term" value="F:tRNA binding"/>
    <property type="evidence" value="ECO:0007669"/>
    <property type="project" value="TreeGrafter"/>
</dbReference>
<dbReference type="GO" id="GO:0006430">
    <property type="term" value="P:lysyl-tRNA aminoacylation"/>
    <property type="evidence" value="ECO:0007669"/>
    <property type="project" value="InterPro"/>
</dbReference>
<dbReference type="FunFam" id="3.30.930.10:FF:000017">
    <property type="entry name" value="Elongation factor P--(R)-beta-lysine ligase"/>
    <property type="match status" value="1"/>
</dbReference>
<dbReference type="Gene3D" id="3.30.930.10">
    <property type="entry name" value="Bira Bifunctional Protein, Domain 2"/>
    <property type="match status" value="1"/>
</dbReference>
<dbReference type="HAMAP" id="MF_00174">
    <property type="entry name" value="EF_P_modif_A"/>
    <property type="match status" value="1"/>
</dbReference>
<dbReference type="InterPro" id="IPR004364">
    <property type="entry name" value="Aa-tRNA-synt_II"/>
</dbReference>
<dbReference type="InterPro" id="IPR006195">
    <property type="entry name" value="aa-tRNA-synth_II"/>
</dbReference>
<dbReference type="InterPro" id="IPR045864">
    <property type="entry name" value="aa-tRNA-synth_II/BPL/LPL"/>
</dbReference>
<dbReference type="InterPro" id="IPR004525">
    <property type="entry name" value="EpmA"/>
</dbReference>
<dbReference type="InterPro" id="IPR018149">
    <property type="entry name" value="Lys-tRNA-synth_II_C"/>
</dbReference>
<dbReference type="NCBIfam" id="TIGR00462">
    <property type="entry name" value="genX"/>
    <property type="match status" value="1"/>
</dbReference>
<dbReference type="NCBIfam" id="NF006828">
    <property type="entry name" value="PRK09350.1"/>
    <property type="match status" value="1"/>
</dbReference>
<dbReference type="PANTHER" id="PTHR42918:SF6">
    <property type="entry name" value="ELONGATION FACTOR P--(R)-BETA-LYSINE LIGASE"/>
    <property type="match status" value="1"/>
</dbReference>
<dbReference type="PANTHER" id="PTHR42918">
    <property type="entry name" value="LYSYL-TRNA SYNTHETASE"/>
    <property type="match status" value="1"/>
</dbReference>
<dbReference type="Pfam" id="PF00152">
    <property type="entry name" value="tRNA-synt_2"/>
    <property type="match status" value="1"/>
</dbReference>
<dbReference type="PRINTS" id="PR00982">
    <property type="entry name" value="TRNASYNTHLYS"/>
</dbReference>
<dbReference type="SUPFAM" id="SSF55681">
    <property type="entry name" value="Class II aaRS and biotin synthetases"/>
    <property type="match status" value="1"/>
</dbReference>
<dbReference type="PROSITE" id="PS50862">
    <property type="entry name" value="AA_TRNA_LIGASE_II"/>
    <property type="match status" value="1"/>
</dbReference>
<keyword id="KW-0067">ATP-binding</keyword>
<keyword id="KW-0436">Ligase</keyword>
<keyword id="KW-0547">Nucleotide-binding</keyword>
<feature type="chain" id="PRO_1000023630" description="Elongation factor P--(R)-beta-lysine ligase">
    <location>
        <begin position="1"/>
        <end position="325"/>
    </location>
</feature>
<feature type="binding site" evidence="1">
    <location>
        <begin position="76"/>
        <end position="78"/>
    </location>
    <ligand>
        <name>substrate</name>
    </ligand>
</feature>
<feature type="binding site" evidence="1">
    <location>
        <begin position="100"/>
        <end position="102"/>
    </location>
    <ligand>
        <name>ATP</name>
        <dbReference type="ChEBI" id="CHEBI:30616"/>
    </ligand>
</feature>
<feature type="binding site" evidence="1">
    <location>
        <position position="109"/>
    </location>
    <ligand>
        <name>ATP</name>
        <dbReference type="ChEBI" id="CHEBI:30616"/>
    </ligand>
</feature>
<feature type="binding site" evidence="1">
    <location>
        <position position="118"/>
    </location>
    <ligand>
        <name>substrate</name>
    </ligand>
</feature>
<feature type="binding site" evidence="1">
    <location>
        <begin position="244"/>
        <end position="245"/>
    </location>
    <ligand>
        <name>ATP</name>
        <dbReference type="ChEBI" id="CHEBI:30616"/>
    </ligand>
</feature>
<feature type="binding site" evidence="1">
    <location>
        <position position="251"/>
    </location>
    <ligand>
        <name>substrate</name>
    </ligand>
</feature>
<feature type="binding site" evidence="1">
    <location>
        <position position="300"/>
    </location>
    <ligand>
        <name>ATP</name>
        <dbReference type="ChEBI" id="CHEBI:30616"/>
    </ligand>
</feature>
<protein>
    <recommendedName>
        <fullName evidence="1">Elongation factor P--(R)-beta-lysine ligase</fullName>
        <shortName evidence="1">EF-P--(R)-beta-lysine ligase</shortName>
        <ecNumber evidence="1">6.3.2.-</ecNumber>
    </recommendedName>
    <alternativeName>
        <fullName evidence="1">EF-P post-translational modification enzyme A</fullName>
    </alternativeName>
    <alternativeName>
        <fullName evidence="1">EF-P-lysine lysyltransferase</fullName>
    </alternativeName>
</protein>
<proteinExistence type="inferred from homology"/>
<name>EPMA_SALPA</name>
<accession>Q5PLH2</accession>